<comment type="similarity">
    <text evidence="1">Belongs to the eukaryotic ribosomal protein eL39 family.</text>
</comment>
<evidence type="ECO:0000255" key="1">
    <source>
        <dbReference type="HAMAP-Rule" id="MF_00629"/>
    </source>
</evidence>
<evidence type="ECO:0000305" key="2"/>
<feature type="chain" id="PRO_1000212324" description="Large ribosomal subunit protein eL39">
    <location>
        <begin position="1"/>
        <end position="51"/>
    </location>
</feature>
<sequence>MSRNKPVAKKFRLAKALKANSPIPIWIVLKTRGRVRYNPLRRNWRRNDLKV</sequence>
<protein>
    <recommendedName>
        <fullName evidence="1">Large ribosomal subunit protein eL39</fullName>
    </recommendedName>
    <alternativeName>
        <fullName evidence="2">50S ribosomal protein L39e</fullName>
    </alternativeName>
</protein>
<organism>
    <name type="scientific">Saccharolobus islandicus (strain M.14.25 / Kamchatka #1)</name>
    <name type="common">Sulfolobus islandicus</name>
    <dbReference type="NCBI Taxonomy" id="427317"/>
    <lineage>
        <taxon>Archaea</taxon>
        <taxon>Thermoproteota</taxon>
        <taxon>Thermoprotei</taxon>
        <taxon>Sulfolobales</taxon>
        <taxon>Sulfolobaceae</taxon>
        <taxon>Saccharolobus</taxon>
    </lineage>
</organism>
<keyword id="KW-0687">Ribonucleoprotein</keyword>
<keyword id="KW-0689">Ribosomal protein</keyword>
<accession>C3MXG5</accession>
<gene>
    <name evidence="1" type="primary">rpl39e</name>
    <name type="ordered locus">M1425_1753</name>
</gene>
<proteinExistence type="inferred from homology"/>
<reference key="1">
    <citation type="journal article" date="2009" name="Proc. Natl. Acad. Sci. U.S.A.">
        <title>Biogeography of the Sulfolobus islandicus pan-genome.</title>
        <authorList>
            <person name="Reno M.L."/>
            <person name="Held N.L."/>
            <person name="Fields C.J."/>
            <person name="Burke P.V."/>
            <person name="Whitaker R.J."/>
        </authorList>
    </citation>
    <scope>NUCLEOTIDE SEQUENCE [LARGE SCALE GENOMIC DNA]</scope>
    <source>
        <strain>M.14.25 / Kamchatka #1</strain>
    </source>
</reference>
<name>RL39_SACI4</name>
<dbReference type="EMBL" id="CP001400">
    <property type="protein sequence ID" value="ACP38499.1"/>
    <property type="molecule type" value="Genomic_DNA"/>
</dbReference>
<dbReference type="RefSeq" id="WP_009990648.1">
    <property type="nucleotide sequence ID" value="NC_012588.1"/>
</dbReference>
<dbReference type="SMR" id="C3MXG5"/>
<dbReference type="KEGG" id="sia:M1425_1753"/>
<dbReference type="HOGENOM" id="CLU_181948_4_0_2"/>
<dbReference type="Proteomes" id="UP000001350">
    <property type="component" value="Chromosome"/>
</dbReference>
<dbReference type="GO" id="GO:0022625">
    <property type="term" value="C:cytosolic large ribosomal subunit"/>
    <property type="evidence" value="ECO:0007669"/>
    <property type="project" value="TreeGrafter"/>
</dbReference>
<dbReference type="GO" id="GO:0003735">
    <property type="term" value="F:structural constituent of ribosome"/>
    <property type="evidence" value="ECO:0007669"/>
    <property type="project" value="InterPro"/>
</dbReference>
<dbReference type="GO" id="GO:0006412">
    <property type="term" value="P:translation"/>
    <property type="evidence" value="ECO:0007669"/>
    <property type="project" value="UniProtKB-UniRule"/>
</dbReference>
<dbReference type="FunFam" id="1.10.1620.10:FF:000001">
    <property type="entry name" value="60S ribosomal protein-like L39"/>
    <property type="match status" value="1"/>
</dbReference>
<dbReference type="Gene3D" id="1.10.1620.10">
    <property type="entry name" value="Ribosomal protein L39e"/>
    <property type="match status" value="1"/>
</dbReference>
<dbReference type="HAMAP" id="MF_00629">
    <property type="entry name" value="Ribosomal_eL39"/>
    <property type="match status" value="1"/>
</dbReference>
<dbReference type="InterPro" id="IPR000077">
    <property type="entry name" value="Ribosomal_eL39"/>
</dbReference>
<dbReference type="InterPro" id="IPR020083">
    <property type="entry name" value="Ribosomal_eL39_CS"/>
</dbReference>
<dbReference type="InterPro" id="IPR023626">
    <property type="entry name" value="Ribosomal_eL39_dom_sf"/>
</dbReference>
<dbReference type="NCBIfam" id="NF002316">
    <property type="entry name" value="PRK01242.1"/>
    <property type="match status" value="1"/>
</dbReference>
<dbReference type="PANTHER" id="PTHR19970:SF0">
    <property type="entry name" value="LARGE RIBOSOMAL SUBUNIT PROTEIN EL39"/>
    <property type="match status" value="1"/>
</dbReference>
<dbReference type="PANTHER" id="PTHR19970">
    <property type="entry name" value="RIBOSOMAL PROTEIN L39E"/>
    <property type="match status" value="1"/>
</dbReference>
<dbReference type="Pfam" id="PF00832">
    <property type="entry name" value="Ribosomal_L39"/>
    <property type="match status" value="1"/>
</dbReference>
<dbReference type="SUPFAM" id="SSF48662">
    <property type="entry name" value="Ribosomal protein L39e"/>
    <property type="match status" value="1"/>
</dbReference>
<dbReference type="PROSITE" id="PS00051">
    <property type="entry name" value="RIBOSOMAL_L39E"/>
    <property type="match status" value="1"/>
</dbReference>